<proteinExistence type="inferred from homology"/>
<accession>B1XUS8</accession>
<dbReference type="EMBL" id="CP001010">
    <property type="protein sequence ID" value="ACB44105.1"/>
    <property type="molecule type" value="Genomic_DNA"/>
</dbReference>
<dbReference type="SMR" id="B1XUS8"/>
<dbReference type="STRING" id="452638.Pnec_0907"/>
<dbReference type="KEGG" id="pne:Pnec_0907"/>
<dbReference type="eggNOG" id="COG1219">
    <property type="taxonomic scope" value="Bacteria"/>
</dbReference>
<dbReference type="HOGENOM" id="CLU_014218_8_2_4"/>
<dbReference type="OrthoDB" id="9804062at2"/>
<dbReference type="GO" id="GO:0009376">
    <property type="term" value="C:HslUV protease complex"/>
    <property type="evidence" value="ECO:0007669"/>
    <property type="project" value="TreeGrafter"/>
</dbReference>
<dbReference type="GO" id="GO:0005524">
    <property type="term" value="F:ATP binding"/>
    <property type="evidence" value="ECO:0007669"/>
    <property type="project" value="UniProtKB-UniRule"/>
</dbReference>
<dbReference type="GO" id="GO:0016887">
    <property type="term" value="F:ATP hydrolysis activity"/>
    <property type="evidence" value="ECO:0007669"/>
    <property type="project" value="InterPro"/>
</dbReference>
<dbReference type="GO" id="GO:0140662">
    <property type="term" value="F:ATP-dependent protein folding chaperone"/>
    <property type="evidence" value="ECO:0007669"/>
    <property type="project" value="InterPro"/>
</dbReference>
<dbReference type="GO" id="GO:0046983">
    <property type="term" value="F:protein dimerization activity"/>
    <property type="evidence" value="ECO:0007669"/>
    <property type="project" value="InterPro"/>
</dbReference>
<dbReference type="GO" id="GO:0051082">
    <property type="term" value="F:unfolded protein binding"/>
    <property type="evidence" value="ECO:0007669"/>
    <property type="project" value="UniProtKB-UniRule"/>
</dbReference>
<dbReference type="GO" id="GO:0008270">
    <property type="term" value="F:zinc ion binding"/>
    <property type="evidence" value="ECO:0007669"/>
    <property type="project" value="InterPro"/>
</dbReference>
<dbReference type="GO" id="GO:0051301">
    <property type="term" value="P:cell division"/>
    <property type="evidence" value="ECO:0007669"/>
    <property type="project" value="TreeGrafter"/>
</dbReference>
<dbReference type="GO" id="GO:0051603">
    <property type="term" value="P:proteolysis involved in protein catabolic process"/>
    <property type="evidence" value="ECO:0007669"/>
    <property type="project" value="TreeGrafter"/>
</dbReference>
<dbReference type="CDD" id="cd19497">
    <property type="entry name" value="RecA-like_ClpX"/>
    <property type="match status" value="1"/>
</dbReference>
<dbReference type="FunFam" id="1.10.8.60:FF:000002">
    <property type="entry name" value="ATP-dependent Clp protease ATP-binding subunit ClpX"/>
    <property type="match status" value="1"/>
</dbReference>
<dbReference type="FunFam" id="3.40.50.300:FF:000005">
    <property type="entry name" value="ATP-dependent Clp protease ATP-binding subunit ClpX"/>
    <property type="match status" value="1"/>
</dbReference>
<dbReference type="Gene3D" id="1.10.8.60">
    <property type="match status" value="1"/>
</dbReference>
<dbReference type="Gene3D" id="6.20.220.10">
    <property type="entry name" value="ClpX chaperone, C4-type zinc finger domain"/>
    <property type="match status" value="1"/>
</dbReference>
<dbReference type="Gene3D" id="3.40.50.300">
    <property type="entry name" value="P-loop containing nucleotide triphosphate hydrolases"/>
    <property type="match status" value="1"/>
</dbReference>
<dbReference type="HAMAP" id="MF_00175">
    <property type="entry name" value="ClpX"/>
    <property type="match status" value="1"/>
</dbReference>
<dbReference type="InterPro" id="IPR003593">
    <property type="entry name" value="AAA+_ATPase"/>
</dbReference>
<dbReference type="InterPro" id="IPR050052">
    <property type="entry name" value="ATP-dep_Clp_protease_ClpX"/>
</dbReference>
<dbReference type="InterPro" id="IPR003959">
    <property type="entry name" value="ATPase_AAA_core"/>
</dbReference>
<dbReference type="InterPro" id="IPR019489">
    <property type="entry name" value="Clp_ATPase_C"/>
</dbReference>
<dbReference type="InterPro" id="IPR004487">
    <property type="entry name" value="Clp_protease_ATP-bd_su_ClpX"/>
</dbReference>
<dbReference type="InterPro" id="IPR046425">
    <property type="entry name" value="ClpX_bact"/>
</dbReference>
<dbReference type="InterPro" id="IPR027417">
    <property type="entry name" value="P-loop_NTPase"/>
</dbReference>
<dbReference type="InterPro" id="IPR010603">
    <property type="entry name" value="Znf_CppX_C4"/>
</dbReference>
<dbReference type="InterPro" id="IPR038366">
    <property type="entry name" value="Znf_CppX_C4_sf"/>
</dbReference>
<dbReference type="NCBIfam" id="TIGR00382">
    <property type="entry name" value="clpX"/>
    <property type="match status" value="1"/>
</dbReference>
<dbReference type="NCBIfam" id="NF003745">
    <property type="entry name" value="PRK05342.1"/>
    <property type="match status" value="1"/>
</dbReference>
<dbReference type="PANTHER" id="PTHR48102:SF7">
    <property type="entry name" value="ATP-DEPENDENT CLP PROTEASE ATP-BINDING SUBUNIT CLPX-LIKE, MITOCHONDRIAL"/>
    <property type="match status" value="1"/>
</dbReference>
<dbReference type="PANTHER" id="PTHR48102">
    <property type="entry name" value="ATP-DEPENDENT CLP PROTEASE ATP-BINDING SUBUNIT CLPX-LIKE, MITOCHONDRIAL-RELATED"/>
    <property type="match status" value="1"/>
</dbReference>
<dbReference type="Pfam" id="PF07724">
    <property type="entry name" value="AAA_2"/>
    <property type="match status" value="1"/>
</dbReference>
<dbReference type="Pfam" id="PF10431">
    <property type="entry name" value="ClpB_D2-small"/>
    <property type="match status" value="1"/>
</dbReference>
<dbReference type="Pfam" id="PF06689">
    <property type="entry name" value="zf-C4_ClpX"/>
    <property type="match status" value="1"/>
</dbReference>
<dbReference type="SMART" id="SM00382">
    <property type="entry name" value="AAA"/>
    <property type="match status" value="1"/>
</dbReference>
<dbReference type="SMART" id="SM01086">
    <property type="entry name" value="ClpB_D2-small"/>
    <property type="match status" value="1"/>
</dbReference>
<dbReference type="SMART" id="SM00994">
    <property type="entry name" value="zf-C4_ClpX"/>
    <property type="match status" value="1"/>
</dbReference>
<dbReference type="SUPFAM" id="SSF57716">
    <property type="entry name" value="Glucocorticoid receptor-like (DNA-binding domain)"/>
    <property type="match status" value="1"/>
</dbReference>
<dbReference type="SUPFAM" id="SSF52540">
    <property type="entry name" value="P-loop containing nucleoside triphosphate hydrolases"/>
    <property type="match status" value="1"/>
</dbReference>
<dbReference type="PROSITE" id="PS51902">
    <property type="entry name" value="CLPX_ZB"/>
    <property type="match status" value="1"/>
</dbReference>
<gene>
    <name evidence="1" type="primary">clpX</name>
    <name type="ordered locus">Pnec_0907</name>
</gene>
<protein>
    <recommendedName>
        <fullName evidence="1">ATP-dependent Clp protease ATP-binding subunit ClpX</fullName>
    </recommendedName>
</protein>
<keyword id="KW-0067">ATP-binding</keyword>
<keyword id="KW-0143">Chaperone</keyword>
<keyword id="KW-0479">Metal-binding</keyword>
<keyword id="KW-0547">Nucleotide-binding</keyword>
<keyword id="KW-0862">Zinc</keyword>
<name>CLPX_POLNS</name>
<reference key="1">
    <citation type="journal article" date="2013" name="Proc. Natl. Acad. Sci. U.S.A.">
        <title>Polynucleobacter necessarius, a model for genome reduction in both free-living and symbiotic bacteria.</title>
        <authorList>
            <person name="Boscaro V."/>
            <person name="Felletti M."/>
            <person name="Vannini C."/>
            <person name="Ackerman M.S."/>
            <person name="Chain P.S."/>
            <person name="Malfatti S."/>
            <person name="Vergez L.M."/>
            <person name="Shin M."/>
            <person name="Doak T.G."/>
            <person name="Lynch M."/>
            <person name="Petroni G."/>
        </authorList>
    </citation>
    <scope>NUCLEOTIDE SEQUENCE [LARGE SCALE GENOMIC DNA]</scope>
    <source>
        <strain>STIR1</strain>
    </source>
</reference>
<comment type="function">
    <text evidence="1">ATP-dependent specificity component of the Clp protease. It directs the protease to specific substrates. Can perform chaperone functions in the absence of ClpP.</text>
</comment>
<comment type="subunit">
    <text evidence="1">Component of the ClpX-ClpP complex. Forms a hexameric ring that, in the presence of ATP, binds to fourteen ClpP subunits assembled into a disk-like structure with a central cavity, resembling the structure of eukaryotic proteasomes.</text>
</comment>
<comment type="similarity">
    <text evidence="1">Belongs to the ClpX chaperone family.</text>
</comment>
<feature type="chain" id="PRO_1000118374" description="ATP-dependent Clp protease ATP-binding subunit ClpX">
    <location>
        <begin position="1"/>
        <end position="453"/>
    </location>
</feature>
<feature type="domain" description="ClpX-type ZB" evidence="2">
    <location>
        <begin position="4"/>
        <end position="57"/>
    </location>
</feature>
<feature type="region of interest" description="Disordered" evidence="3">
    <location>
        <begin position="108"/>
        <end position="127"/>
    </location>
</feature>
<feature type="compositionally biased region" description="Basic and acidic residues" evidence="3">
    <location>
        <begin position="109"/>
        <end position="127"/>
    </location>
</feature>
<feature type="binding site" evidence="2">
    <location>
        <position position="16"/>
    </location>
    <ligand>
        <name>Zn(2+)</name>
        <dbReference type="ChEBI" id="CHEBI:29105"/>
    </ligand>
</feature>
<feature type="binding site" evidence="2">
    <location>
        <position position="19"/>
    </location>
    <ligand>
        <name>Zn(2+)</name>
        <dbReference type="ChEBI" id="CHEBI:29105"/>
    </ligand>
</feature>
<feature type="binding site" evidence="2">
    <location>
        <position position="38"/>
    </location>
    <ligand>
        <name>Zn(2+)</name>
        <dbReference type="ChEBI" id="CHEBI:29105"/>
    </ligand>
</feature>
<feature type="binding site" evidence="2">
    <location>
        <position position="41"/>
    </location>
    <ligand>
        <name>Zn(2+)</name>
        <dbReference type="ChEBI" id="CHEBI:29105"/>
    </ligand>
</feature>
<feature type="binding site" evidence="1">
    <location>
        <begin position="149"/>
        <end position="156"/>
    </location>
    <ligand>
        <name>ATP</name>
        <dbReference type="ChEBI" id="CHEBI:30616"/>
    </ligand>
</feature>
<sequence length="453" mass="49731">MSDTNNTNSSDKVLFCSFCGKSQYEVKKLIASPSVFICDECIDLCTDIIQEEINKLPREDSDDSLPTPHQIRKNLDQYVIGQDHAKKTLAVAVYNHYKRLQYLPKPKKEKLDKDGKPVEGSDKKESKLPAKAMVDDVELAKSNILLIGPTGSGKTLLAQTLARMLDVPFVMADATTLTEAGYVGEDVENIIQKLLQACDYNVEKAQRGIVYIDEIDKISRKSDNPSITRDVSGEGVQQALLKLVEGTMASVPPQGGRKHPNQDFLQVDTTNILFICGGAFDGLEKVIQQRTAKTGIGFNATVPGKDDRGVSDLLIEVEPEDLIKFGLIPELIGRLPVVATLAQLDEEALIQILTEPKNALVKQYQALLTMEGSELEVRREALSAIAKKAIARKTGARGLRSILEGSLMDVMYDLPSLKNVQKVIIDESSIADGGKPLLVYKQKVDHADLSKKA</sequence>
<organism>
    <name type="scientific">Polynucleobacter necessarius subsp. necessarius (strain STIR1)</name>
    <dbReference type="NCBI Taxonomy" id="452638"/>
    <lineage>
        <taxon>Bacteria</taxon>
        <taxon>Pseudomonadati</taxon>
        <taxon>Pseudomonadota</taxon>
        <taxon>Betaproteobacteria</taxon>
        <taxon>Burkholderiales</taxon>
        <taxon>Burkholderiaceae</taxon>
        <taxon>Polynucleobacter</taxon>
    </lineage>
</organism>
<evidence type="ECO:0000255" key="1">
    <source>
        <dbReference type="HAMAP-Rule" id="MF_00175"/>
    </source>
</evidence>
<evidence type="ECO:0000255" key="2">
    <source>
        <dbReference type="PROSITE-ProRule" id="PRU01250"/>
    </source>
</evidence>
<evidence type="ECO:0000256" key="3">
    <source>
        <dbReference type="SAM" id="MobiDB-lite"/>
    </source>
</evidence>